<sequence length="1040" mass="111852">MQVLPPGSTGGPSRLFILRPVATTLLMAAILLAGIIGYRFLPVAALPEVDYPTIQVVTLYPGASPDVMTSAVTAPLERQFGQMSGLKQMSSQSSGGASVVTLQFQLTLPLDVAEQEVQAAINADTNLLPSDLPNPPIYSKVNPADPPIMTLAVTSNAMPMTQVEDMVETRVAQKISQVSGVGLVTLAGGQRPAVRVKLNAQAIAALGLTSETVRTAITGANVNSAKGSLDGPERAVTLSANDQMQSADEYRKLIIAYQNGAPVRLGDVATVEQGAENSWLGAWANQAPAIVMNVQRQPGANIIATADSIRQMLPQLTESLPKSVKVTVLSDRTTNIRASVRDTQFELMLAIALVVMIIYLFLRNIPATIIPGVAVPLSLIGTFAVMVFLDFSINNLTLMALTIATGFVVDDAIVVIENISRYIEKGEKPLAAALKGAGEIGFTIISLTFSLIAVLIPLLFMGDIVGRLFREFAVTLAVAILISAVVSLTLTPMMCARMLSQQSLRKQNRFSRACERMFDRVIASYGRGLAKVLNHPWLTLSVAFATLLLSVMLWIVIPKGFFPVQDNGIIQGTLQAPQSSSYASMAQRQRQVAERILQDPAVQSLTTFVGVDGANPTLNSARLQINLKPLDARDDRVQQVISRLQTAVATIPGVALYLQPTQDLTIDTQVSRTQYQFTLQATTLDALSHWVPKLQNALQSLPQLSEVSSDWQDRGLAAWVNVDRDSASRLGISMADVDNALYNAFGQRLISTIYTQANQYRVVLEHNTASTPGLAALETIRLTSRDGGTVPLSAIARIEQRFAPLSINHLDQFPVTTFSFNVPEGYSLGDAVQAILDTEKTLALPADITTQFQGSTLAFQAALGSTVWLIVAAVVAMYIVLGVLYESFIHPITILSTLPTAGVGALLALIIAGSELDIIAIIGIILLIGIVKKNAIMMINFALAAEREQGMSPRDAIFQACLLRFRPILMTTLAALLGALPLMLSTGVGAELRRPLGIAMVGGLLVSQVLTLFTTPVIYLLFDRLSLYVKSRFPRHKEEA</sequence>
<dbReference type="EMBL" id="AM933173">
    <property type="protein sequence ID" value="CAR37999.1"/>
    <property type="molecule type" value="Genomic_DNA"/>
</dbReference>
<dbReference type="RefSeq" id="WP_001197807.1">
    <property type="nucleotide sequence ID" value="NC_011274.1"/>
</dbReference>
<dbReference type="SMR" id="B5RBW8"/>
<dbReference type="KEGG" id="seg:SG2159"/>
<dbReference type="HOGENOM" id="CLU_002755_1_1_6"/>
<dbReference type="Proteomes" id="UP000008321">
    <property type="component" value="Chromosome"/>
</dbReference>
<dbReference type="GO" id="GO:0005886">
    <property type="term" value="C:plasma membrane"/>
    <property type="evidence" value="ECO:0007669"/>
    <property type="project" value="UniProtKB-SubCell"/>
</dbReference>
<dbReference type="GO" id="GO:0042910">
    <property type="term" value="F:xenobiotic transmembrane transporter activity"/>
    <property type="evidence" value="ECO:0007669"/>
    <property type="project" value="TreeGrafter"/>
</dbReference>
<dbReference type="FunFam" id="1.20.1640.10:FF:000001">
    <property type="entry name" value="Efflux pump membrane transporter"/>
    <property type="match status" value="1"/>
</dbReference>
<dbReference type="FunFam" id="3.30.70.1430:FF:000001">
    <property type="entry name" value="Efflux pump membrane transporter"/>
    <property type="match status" value="1"/>
</dbReference>
<dbReference type="FunFam" id="3.30.2090.10:FF:000003">
    <property type="entry name" value="Multidrug resistance protein MdtB"/>
    <property type="match status" value="1"/>
</dbReference>
<dbReference type="Gene3D" id="3.30.70.1430">
    <property type="entry name" value="Multidrug efflux transporter AcrB pore domain"/>
    <property type="match status" value="2"/>
</dbReference>
<dbReference type="Gene3D" id="3.30.70.1440">
    <property type="entry name" value="Multidrug efflux transporter AcrB pore domain"/>
    <property type="match status" value="1"/>
</dbReference>
<dbReference type="Gene3D" id="3.30.70.1320">
    <property type="entry name" value="Multidrug efflux transporter AcrB pore domain like"/>
    <property type="match status" value="1"/>
</dbReference>
<dbReference type="Gene3D" id="3.30.2090.10">
    <property type="entry name" value="Multidrug efflux transporter AcrB TolC docking domain, DN and DC subdomains"/>
    <property type="match status" value="2"/>
</dbReference>
<dbReference type="Gene3D" id="1.20.1640.10">
    <property type="entry name" value="Multidrug efflux transporter AcrB transmembrane domain"/>
    <property type="match status" value="2"/>
</dbReference>
<dbReference type="HAMAP" id="MF_01423">
    <property type="entry name" value="MdtB"/>
    <property type="match status" value="1"/>
</dbReference>
<dbReference type="InterPro" id="IPR027463">
    <property type="entry name" value="AcrB_DN_DC_subdom"/>
</dbReference>
<dbReference type="InterPro" id="IPR001036">
    <property type="entry name" value="Acrflvin-R"/>
</dbReference>
<dbReference type="InterPro" id="IPR022831">
    <property type="entry name" value="Multidrug-R_MdtB"/>
</dbReference>
<dbReference type="NCBIfam" id="NF007798">
    <property type="entry name" value="PRK10503.1"/>
    <property type="match status" value="1"/>
</dbReference>
<dbReference type="NCBIfam" id="NF033617">
    <property type="entry name" value="RND_permease_2"/>
    <property type="match status" value="1"/>
</dbReference>
<dbReference type="PANTHER" id="PTHR32063">
    <property type="match status" value="1"/>
</dbReference>
<dbReference type="PANTHER" id="PTHR32063:SF21">
    <property type="entry name" value="MULTIDRUG RESISTANCE PROTEIN MDTB"/>
    <property type="match status" value="1"/>
</dbReference>
<dbReference type="Pfam" id="PF00873">
    <property type="entry name" value="ACR_tran"/>
    <property type="match status" value="1"/>
</dbReference>
<dbReference type="PRINTS" id="PR00702">
    <property type="entry name" value="ACRIFLAVINRP"/>
</dbReference>
<dbReference type="SUPFAM" id="SSF82693">
    <property type="entry name" value="Multidrug efflux transporter AcrB pore domain, PN1, PN2, PC1 and PC2 subdomains"/>
    <property type="match status" value="3"/>
</dbReference>
<dbReference type="SUPFAM" id="SSF82714">
    <property type="entry name" value="Multidrug efflux transporter AcrB TolC docking domain, DN and DC subdomains"/>
    <property type="match status" value="2"/>
</dbReference>
<dbReference type="SUPFAM" id="SSF82866">
    <property type="entry name" value="Multidrug efflux transporter AcrB transmembrane domain"/>
    <property type="match status" value="2"/>
</dbReference>
<reference key="1">
    <citation type="journal article" date="2008" name="Genome Res.">
        <title>Comparative genome analysis of Salmonella enteritidis PT4 and Salmonella gallinarum 287/91 provides insights into evolutionary and host adaptation pathways.</title>
        <authorList>
            <person name="Thomson N.R."/>
            <person name="Clayton D.J."/>
            <person name="Windhorst D."/>
            <person name="Vernikos G."/>
            <person name="Davidson S."/>
            <person name="Churcher C."/>
            <person name="Quail M.A."/>
            <person name="Stevens M."/>
            <person name="Jones M.A."/>
            <person name="Watson M."/>
            <person name="Barron A."/>
            <person name="Layton A."/>
            <person name="Pickard D."/>
            <person name="Kingsley R.A."/>
            <person name="Bignell A."/>
            <person name="Clark L."/>
            <person name="Harris B."/>
            <person name="Ormond D."/>
            <person name="Abdellah Z."/>
            <person name="Brooks K."/>
            <person name="Cherevach I."/>
            <person name="Chillingworth T."/>
            <person name="Woodward J."/>
            <person name="Norberczak H."/>
            <person name="Lord A."/>
            <person name="Arrowsmith C."/>
            <person name="Jagels K."/>
            <person name="Moule S."/>
            <person name="Mungall K."/>
            <person name="Saunders M."/>
            <person name="Whitehead S."/>
            <person name="Chabalgoity J.A."/>
            <person name="Maskell D."/>
            <person name="Humphreys T."/>
            <person name="Roberts M."/>
            <person name="Barrow P.A."/>
            <person name="Dougan G."/>
            <person name="Parkhill J."/>
        </authorList>
    </citation>
    <scope>NUCLEOTIDE SEQUENCE [LARGE SCALE GENOMIC DNA]</scope>
    <source>
        <strain>287/91 / NCTC 13346</strain>
    </source>
</reference>
<protein>
    <recommendedName>
        <fullName evidence="1">Multidrug resistance protein MdtB</fullName>
    </recommendedName>
    <alternativeName>
        <fullName evidence="1">Multidrug transporter MdtB</fullName>
    </alternativeName>
</protein>
<comment type="subunit">
    <text evidence="1">Part of a tripartite efflux system composed of MdtA, MdtB and MdtC. MdtB forms a heteromultimer with MdtC.</text>
</comment>
<comment type="subcellular location">
    <subcellularLocation>
        <location evidence="1">Cell inner membrane</location>
        <topology evidence="1">Multi-pass membrane protein</topology>
    </subcellularLocation>
</comment>
<comment type="similarity">
    <text evidence="1">Belongs to the resistance-nodulation-cell division (RND) (TC 2.A.6) family. MdtB subfamily.</text>
</comment>
<accession>B5RBW8</accession>
<feature type="chain" id="PRO_1000145660" description="Multidrug resistance protein MdtB">
    <location>
        <begin position="1"/>
        <end position="1040"/>
    </location>
</feature>
<feature type="transmembrane region" description="Helical" evidence="1">
    <location>
        <begin position="25"/>
        <end position="45"/>
    </location>
</feature>
<feature type="transmembrane region" description="Helical" evidence="1">
    <location>
        <begin position="347"/>
        <end position="367"/>
    </location>
</feature>
<feature type="transmembrane region" description="Helical" evidence="1">
    <location>
        <begin position="369"/>
        <end position="389"/>
    </location>
</feature>
<feature type="transmembrane region" description="Helical" evidence="1">
    <location>
        <begin position="396"/>
        <end position="416"/>
    </location>
</feature>
<feature type="transmembrane region" description="Helical" evidence="1">
    <location>
        <begin position="440"/>
        <end position="460"/>
    </location>
</feature>
<feature type="transmembrane region" description="Helical" evidence="1">
    <location>
        <begin position="472"/>
        <end position="492"/>
    </location>
</feature>
<feature type="transmembrane region" description="Helical" evidence="1">
    <location>
        <begin position="537"/>
        <end position="557"/>
    </location>
</feature>
<feature type="transmembrane region" description="Helical" evidence="1">
    <location>
        <begin position="863"/>
        <end position="883"/>
    </location>
</feature>
<feature type="transmembrane region" description="Helical" evidence="1">
    <location>
        <begin position="888"/>
        <end position="908"/>
    </location>
</feature>
<feature type="transmembrane region" description="Helical" evidence="1">
    <location>
        <begin position="910"/>
        <end position="930"/>
    </location>
</feature>
<feature type="transmembrane region" description="Helical" evidence="1">
    <location>
        <begin position="968"/>
        <end position="988"/>
    </location>
</feature>
<feature type="transmembrane region" description="Helical" evidence="1">
    <location>
        <begin position="998"/>
        <end position="1018"/>
    </location>
</feature>
<keyword id="KW-0997">Cell inner membrane</keyword>
<keyword id="KW-1003">Cell membrane</keyword>
<keyword id="KW-0472">Membrane</keyword>
<keyword id="KW-0812">Transmembrane</keyword>
<keyword id="KW-1133">Transmembrane helix</keyword>
<keyword id="KW-0813">Transport</keyword>
<proteinExistence type="inferred from homology"/>
<evidence type="ECO:0000255" key="1">
    <source>
        <dbReference type="HAMAP-Rule" id="MF_01423"/>
    </source>
</evidence>
<name>MDTB_SALG2</name>
<gene>
    <name evidence="1" type="primary">mdtB</name>
    <name type="ordered locus">SG2159</name>
</gene>
<organism>
    <name type="scientific">Salmonella gallinarum (strain 287/91 / NCTC 13346)</name>
    <dbReference type="NCBI Taxonomy" id="550538"/>
    <lineage>
        <taxon>Bacteria</taxon>
        <taxon>Pseudomonadati</taxon>
        <taxon>Pseudomonadota</taxon>
        <taxon>Gammaproteobacteria</taxon>
        <taxon>Enterobacterales</taxon>
        <taxon>Enterobacteriaceae</taxon>
        <taxon>Salmonella</taxon>
    </lineage>
</organism>